<name>TUSC_BUCA5</name>
<reference key="1">
    <citation type="journal article" date="2009" name="Science">
        <title>The dynamics and time scale of ongoing genomic erosion in symbiotic bacteria.</title>
        <authorList>
            <person name="Moran N.A."/>
            <person name="McLaughlin H.J."/>
            <person name="Sorek R."/>
        </authorList>
    </citation>
    <scope>NUCLEOTIDE SEQUENCE [LARGE SCALE GENOMIC DNA]</scope>
    <source>
        <strain>5A</strain>
    </source>
</reference>
<proteinExistence type="inferred from homology"/>
<protein>
    <recommendedName>
        <fullName evidence="1">Protein TusC</fullName>
    </recommendedName>
    <alternativeName>
        <fullName evidence="1">tRNA 2-thiouridine synthesizing protein C</fullName>
    </alternativeName>
</protein>
<sequence>MKMVAFVFSHAPHGISLGREGLDAIFSISLIFKKISVFFIGDGVLQLIKNQQPEHILARNYTSSFSILSLYNIKDLYCCKASLLERGLNNNNNFILNIDVLDSYNLRLKLDNYDAIINF</sequence>
<comment type="function">
    <text evidence="1">Part of a sulfur-relay system required for 2-thiolation of 5-methylaminomethyl-2-thiouridine (mnm(5)s(2)U) at tRNA wobble positions.</text>
</comment>
<comment type="subunit">
    <text evidence="1">Heterohexamer, formed by a dimer of trimers. The hexameric TusBCD complex contains 2 copies each of TusB, TusC and TusD. The TusBCD complex interacts with TusE.</text>
</comment>
<comment type="subcellular location">
    <subcellularLocation>
        <location evidence="1">Cytoplasm</location>
    </subcellularLocation>
</comment>
<comment type="similarity">
    <text evidence="1">Belongs to the DsrF/TusC family.</text>
</comment>
<keyword id="KW-0963">Cytoplasm</keyword>
<keyword id="KW-0819">tRNA processing</keyword>
<accession>B8D9V4</accession>
<organism>
    <name type="scientific">Buchnera aphidicola subsp. Acyrthosiphon pisum (strain 5A)</name>
    <dbReference type="NCBI Taxonomy" id="563178"/>
    <lineage>
        <taxon>Bacteria</taxon>
        <taxon>Pseudomonadati</taxon>
        <taxon>Pseudomonadota</taxon>
        <taxon>Gammaproteobacteria</taxon>
        <taxon>Enterobacterales</taxon>
        <taxon>Erwiniaceae</taxon>
        <taxon>Buchnera</taxon>
    </lineage>
</organism>
<dbReference type="EMBL" id="CP001161">
    <property type="protein sequence ID" value="ACL30875.1"/>
    <property type="molecule type" value="Genomic_DNA"/>
</dbReference>
<dbReference type="RefSeq" id="WP_009874482.1">
    <property type="nucleotide sequence ID" value="NC_011833.1"/>
</dbReference>
<dbReference type="SMR" id="B8D9V4"/>
<dbReference type="KEGG" id="bap:BUAP5A_524"/>
<dbReference type="HOGENOM" id="CLU_155943_1_0_6"/>
<dbReference type="OrthoDB" id="9789418at2"/>
<dbReference type="Proteomes" id="UP000006904">
    <property type="component" value="Chromosome"/>
</dbReference>
<dbReference type="GO" id="GO:0005737">
    <property type="term" value="C:cytoplasm"/>
    <property type="evidence" value="ECO:0007669"/>
    <property type="project" value="UniProtKB-SubCell"/>
</dbReference>
<dbReference type="GO" id="GO:0008033">
    <property type="term" value="P:tRNA processing"/>
    <property type="evidence" value="ECO:0007669"/>
    <property type="project" value="UniProtKB-UniRule"/>
</dbReference>
<dbReference type="Gene3D" id="3.40.1260.10">
    <property type="entry name" value="DsrEFH-like"/>
    <property type="match status" value="1"/>
</dbReference>
<dbReference type="HAMAP" id="MF_00389">
    <property type="entry name" value="Thiourid_synth_C"/>
    <property type="match status" value="1"/>
</dbReference>
<dbReference type="InterPro" id="IPR027396">
    <property type="entry name" value="DsrEFH-like"/>
</dbReference>
<dbReference type="InterPro" id="IPR003787">
    <property type="entry name" value="Sulphur_relay_DsrE/F-like"/>
</dbReference>
<dbReference type="InterPro" id="IPR037450">
    <property type="entry name" value="Sulphur_relay_TusC"/>
</dbReference>
<dbReference type="InterPro" id="IPR017462">
    <property type="entry name" value="Sulphur_relay_TusC/DsrF"/>
</dbReference>
<dbReference type="NCBIfam" id="NF001238">
    <property type="entry name" value="PRK00211.1"/>
    <property type="match status" value="1"/>
</dbReference>
<dbReference type="NCBIfam" id="TIGR03010">
    <property type="entry name" value="sulf_tusC_dsrF"/>
    <property type="match status" value="1"/>
</dbReference>
<dbReference type="PANTHER" id="PTHR38780">
    <property type="entry name" value="PROTEIN TUSC"/>
    <property type="match status" value="1"/>
</dbReference>
<dbReference type="PANTHER" id="PTHR38780:SF1">
    <property type="entry name" value="PROTEIN TUSC"/>
    <property type="match status" value="1"/>
</dbReference>
<dbReference type="Pfam" id="PF02635">
    <property type="entry name" value="DsrE"/>
    <property type="match status" value="1"/>
</dbReference>
<dbReference type="SUPFAM" id="SSF75169">
    <property type="entry name" value="DsrEFH-like"/>
    <property type="match status" value="1"/>
</dbReference>
<gene>
    <name evidence="1" type="primary">tusC</name>
    <name type="ordered locus">BUAP5A_524</name>
</gene>
<evidence type="ECO:0000255" key="1">
    <source>
        <dbReference type="HAMAP-Rule" id="MF_00389"/>
    </source>
</evidence>
<feature type="chain" id="PRO_1000134406" description="Protein TusC">
    <location>
        <begin position="1"/>
        <end position="119"/>
    </location>
</feature>